<accession>Q03PZ8</accession>
<keyword id="KW-0028">Amino-acid biosynthesis</keyword>
<keyword id="KW-0061">Asparagine biosynthesis</keyword>
<keyword id="KW-0067">ATP-binding</keyword>
<keyword id="KW-0963">Cytoplasm</keyword>
<keyword id="KW-0436">Ligase</keyword>
<keyword id="KW-0547">Nucleotide-binding</keyword>
<keyword id="KW-1185">Reference proteome</keyword>
<feature type="chain" id="PRO_1000017951" description="Aspartate--ammonia ligase">
    <location>
        <begin position="1"/>
        <end position="335"/>
    </location>
</feature>
<name>ASNA_LEVBA</name>
<proteinExistence type="inferred from homology"/>
<reference key="1">
    <citation type="journal article" date="2006" name="Proc. Natl. Acad. Sci. U.S.A.">
        <title>Comparative genomics of the lactic acid bacteria.</title>
        <authorList>
            <person name="Makarova K.S."/>
            <person name="Slesarev A."/>
            <person name="Wolf Y.I."/>
            <person name="Sorokin A."/>
            <person name="Mirkin B."/>
            <person name="Koonin E.V."/>
            <person name="Pavlov A."/>
            <person name="Pavlova N."/>
            <person name="Karamychev V."/>
            <person name="Polouchine N."/>
            <person name="Shakhova V."/>
            <person name="Grigoriev I."/>
            <person name="Lou Y."/>
            <person name="Rohksar D."/>
            <person name="Lucas S."/>
            <person name="Huang K."/>
            <person name="Goodstein D.M."/>
            <person name="Hawkins T."/>
            <person name="Plengvidhya V."/>
            <person name="Welker D."/>
            <person name="Hughes J."/>
            <person name="Goh Y."/>
            <person name="Benson A."/>
            <person name="Baldwin K."/>
            <person name="Lee J.-H."/>
            <person name="Diaz-Muniz I."/>
            <person name="Dosti B."/>
            <person name="Smeianov V."/>
            <person name="Wechter W."/>
            <person name="Barabote R."/>
            <person name="Lorca G."/>
            <person name="Altermann E."/>
            <person name="Barrangou R."/>
            <person name="Ganesan B."/>
            <person name="Xie Y."/>
            <person name="Rawsthorne H."/>
            <person name="Tamir D."/>
            <person name="Parker C."/>
            <person name="Breidt F."/>
            <person name="Broadbent J.R."/>
            <person name="Hutkins R."/>
            <person name="O'Sullivan D."/>
            <person name="Steele J."/>
            <person name="Unlu G."/>
            <person name="Saier M.H. Jr."/>
            <person name="Klaenhammer T."/>
            <person name="Richardson P."/>
            <person name="Kozyavkin S."/>
            <person name="Weimer B.C."/>
            <person name="Mills D.A."/>
        </authorList>
    </citation>
    <scope>NUCLEOTIDE SEQUENCE [LARGE SCALE GENOMIC DNA]</scope>
    <source>
        <strain>ATCC 367 / BCRC 12310 / CIP 105137 / JCM 1170 / LMG 11437 / NCIMB 947 / NCTC 947</strain>
    </source>
</reference>
<protein>
    <recommendedName>
        <fullName evidence="1">Aspartate--ammonia ligase</fullName>
        <ecNumber evidence="1">6.3.1.1</ecNumber>
    </recommendedName>
    <alternativeName>
        <fullName evidence="1">Asparagine synthetase A</fullName>
    </alternativeName>
</protein>
<sequence length="335" mass="38743">MHLIIPDSYDPKLSVKDTQRAIRYIRETFQDEFGAQLNLSRLSAPMFVEKSTGLNDNLNGIEQPVSFTMQDMGDSQIEIVHSLAKWKRVALKRYGFNLHEGLYTNMNAIRKDEDLDNFHSAYVDQWDWEKVITKEERTLDTLKQTVRQIFKVIKHMEHEVWYKFPEAVHHLPDKIHFITTQELEDRFPDLTPRERENAITKELGCVFLMQIGGALKSGKRHDGRAPDYDDWQLNGDILFWYEPLKQAIEISSMGIRVDAESMQRQLKIADAEDRLSLPYHQMVLHEEVPFTIGGGIGQSRLCMLLLGKAHVGEVQAALWPQAMIDQCEAANIHLL</sequence>
<organism>
    <name type="scientific">Levilactobacillus brevis (strain ATCC 367 / BCRC 12310 / CIP 105137 / JCM 1170 / LMG 11437 / NCIMB 947 / NCTC 947)</name>
    <name type="common">Lactobacillus brevis</name>
    <dbReference type="NCBI Taxonomy" id="387344"/>
    <lineage>
        <taxon>Bacteria</taxon>
        <taxon>Bacillati</taxon>
        <taxon>Bacillota</taxon>
        <taxon>Bacilli</taxon>
        <taxon>Lactobacillales</taxon>
        <taxon>Lactobacillaceae</taxon>
        <taxon>Levilactobacillus</taxon>
    </lineage>
</organism>
<evidence type="ECO:0000255" key="1">
    <source>
        <dbReference type="HAMAP-Rule" id="MF_00555"/>
    </source>
</evidence>
<dbReference type="EC" id="6.3.1.1" evidence="1"/>
<dbReference type="EMBL" id="CP000416">
    <property type="protein sequence ID" value="ABJ64724.1"/>
    <property type="molecule type" value="Genomic_DNA"/>
</dbReference>
<dbReference type="RefSeq" id="WP_011668348.1">
    <property type="nucleotide sequence ID" value="NC_008497.1"/>
</dbReference>
<dbReference type="SMR" id="Q03PZ8"/>
<dbReference type="STRING" id="387344.LVIS_1649"/>
<dbReference type="KEGG" id="lbr:LVIS_1649"/>
<dbReference type="PATRIC" id="fig|387344.15.peg.1562"/>
<dbReference type="eggNOG" id="COG2502">
    <property type="taxonomic scope" value="Bacteria"/>
</dbReference>
<dbReference type="HOGENOM" id="CLU_071543_0_0_9"/>
<dbReference type="UniPathway" id="UPA00134">
    <property type="reaction ID" value="UER00194"/>
</dbReference>
<dbReference type="Proteomes" id="UP000001652">
    <property type="component" value="Chromosome"/>
</dbReference>
<dbReference type="GO" id="GO:0005829">
    <property type="term" value="C:cytosol"/>
    <property type="evidence" value="ECO:0007669"/>
    <property type="project" value="TreeGrafter"/>
</dbReference>
<dbReference type="GO" id="GO:0004071">
    <property type="term" value="F:aspartate-ammonia ligase activity"/>
    <property type="evidence" value="ECO:0007669"/>
    <property type="project" value="UniProtKB-UniRule"/>
</dbReference>
<dbReference type="GO" id="GO:0005524">
    <property type="term" value="F:ATP binding"/>
    <property type="evidence" value="ECO:0007669"/>
    <property type="project" value="UniProtKB-UniRule"/>
</dbReference>
<dbReference type="GO" id="GO:0140096">
    <property type="term" value="F:catalytic activity, acting on a protein"/>
    <property type="evidence" value="ECO:0007669"/>
    <property type="project" value="UniProtKB-ARBA"/>
</dbReference>
<dbReference type="GO" id="GO:0016740">
    <property type="term" value="F:transferase activity"/>
    <property type="evidence" value="ECO:0007669"/>
    <property type="project" value="UniProtKB-ARBA"/>
</dbReference>
<dbReference type="GO" id="GO:0070981">
    <property type="term" value="P:L-asparagine biosynthetic process"/>
    <property type="evidence" value="ECO:0007669"/>
    <property type="project" value="UniProtKB-UniRule"/>
</dbReference>
<dbReference type="CDD" id="cd00645">
    <property type="entry name" value="AsnA"/>
    <property type="match status" value="1"/>
</dbReference>
<dbReference type="Gene3D" id="3.30.930.10">
    <property type="entry name" value="Bira Bifunctional Protein, Domain 2"/>
    <property type="match status" value="1"/>
</dbReference>
<dbReference type="HAMAP" id="MF_00555">
    <property type="entry name" value="AsnA"/>
    <property type="match status" value="1"/>
</dbReference>
<dbReference type="InterPro" id="IPR006195">
    <property type="entry name" value="aa-tRNA-synth_II"/>
</dbReference>
<dbReference type="InterPro" id="IPR045864">
    <property type="entry name" value="aa-tRNA-synth_II/BPL/LPL"/>
</dbReference>
<dbReference type="InterPro" id="IPR004618">
    <property type="entry name" value="AsnA"/>
</dbReference>
<dbReference type="NCBIfam" id="TIGR00669">
    <property type="entry name" value="asnA"/>
    <property type="match status" value="1"/>
</dbReference>
<dbReference type="PANTHER" id="PTHR30073">
    <property type="entry name" value="ASPARTATE--AMMONIA LIGASE"/>
    <property type="match status" value="1"/>
</dbReference>
<dbReference type="PANTHER" id="PTHR30073:SF5">
    <property type="entry name" value="ASPARTATE--AMMONIA LIGASE"/>
    <property type="match status" value="1"/>
</dbReference>
<dbReference type="Pfam" id="PF03590">
    <property type="entry name" value="AsnA"/>
    <property type="match status" value="1"/>
</dbReference>
<dbReference type="PIRSF" id="PIRSF001555">
    <property type="entry name" value="Asp_ammon_ligase"/>
    <property type="match status" value="1"/>
</dbReference>
<dbReference type="SUPFAM" id="SSF55681">
    <property type="entry name" value="Class II aaRS and biotin synthetases"/>
    <property type="match status" value="1"/>
</dbReference>
<dbReference type="PROSITE" id="PS50862">
    <property type="entry name" value="AA_TRNA_LIGASE_II"/>
    <property type="match status" value="1"/>
</dbReference>
<gene>
    <name evidence="1" type="primary">asnA</name>
    <name type="ordered locus">LVIS_1649</name>
</gene>
<comment type="catalytic activity">
    <reaction evidence="1">
        <text>L-aspartate + NH4(+) + ATP = L-asparagine + AMP + diphosphate + H(+)</text>
        <dbReference type="Rhea" id="RHEA:11372"/>
        <dbReference type="ChEBI" id="CHEBI:15378"/>
        <dbReference type="ChEBI" id="CHEBI:28938"/>
        <dbReference type="ChEBI" id="CHEBI:29991"/>
        <dbReference type="ChEBI" id="CHEBI:30616"/>
        <dbReference type="ChEBI" id="CHEBI:33019"/>
        <dbReference type="ChEBI" id="CHEBI:58048"/>
        <dbReference type="ChEBI" id="CHEBI:456215"/>
        <dbReference type="EC" id="6.3.1.1"/>
    </reaction>
</comment>
<comment type="pathway">
    <text evidence="1">Amino-acid biosynthesis; L-asparagine biosynthesis; L-asparagine from L-aspartate (ammonia route): step 1/1.</text>
</comment>
<comment type="subcellular location">
    <subcellularLocation>
        <location evidence="1">Cytoplasm</location>
    </subcellularLocation>
</comment>
<comment type="similarity">
    <text evidence="1">Belongs to the class-II aminoacyl-tRNA synthetase family. AsnA subfamily.</text>
</comment>